<name>BL1S3_HUMAN</name>
<dbReference type="EMBL" id="AY531266">
    <property type="protein sequence ID" value="AAT00462.1"/>
    <property type="molecule type" value="mRNA"/>
</dbReference>
<dbReference type="EMBL" id="AK296695">
    <property type="protein sequence ID" value="BAG59289.1"/>
    <property type="molecule type" value="mRNA"/>
</dbReference>
<dbReference type="EMBL" id="BC151151">
    <property type="protein sequence ID" value="AAI51152.1"/>
    <property type="molecule type" value="mRNA"/>
</dbReference>
<dbReference type="EMBL" id="BC151152">
    <property type="protein sequence ID" value="AAI51153.1"/>
    <property type="molecule type" value="mRNA"/>
</dbReference>
<dbReference type="CCDS" id="CCDS12656.1"/>
<dbReference type="RefSeq" id="NP_997715.1">
    <property type="nucleotide sequence ID" value="NM_212550.5"/>
</dbReference>
<dbReference type="SMR" id="Q6QNY0"/>
<dbReference type="BioGRID" id="132736">
    <property type="interactions" value="18"/>
</dbReference>
<dbReference type="ComplexPortal" id="CPX-1910">
    <property type="entry name" value="BLOC-1 complex"/>
</dbReference>
<dbReference type="CORUM" id="Q6QNY0"/>
<dbReference type="FunCoup" id="Q6QNY0">
    <property type="interactions" value="398"/>
</dbReference>
<dbReference type="IntAct" id="Q6QNY0">
    <property type="interactions" value="13"/>
</dbReference>
<dbReference type="STRING" id="9606.ENSP00000393840"/>
<dbReference type="GlyGen" id="Q6QNY0">
    <property type="glycosylation" value="3 sites, 1 O-linked glycan (1 site)"/>
</dbReference>
<dbReference type="iPTMnet" id="Q6QNY0"/>
<dbReference type="PhosphoSitePlus" id="Q6QNY0"/>
<dbReference type="BioMuta" id="BLOC1S3"/>
<dbReference type="DMDM" id="74749299"/>
<dbReference type="jPOST" id="Q6QNY0"/>
<dbReference type="MassIVE" id="Q6QNY0"/>
<dbReference type="PaxDb" id="9606-ENSP00000393840"/>
<dbReference type="PeptideAtlas" id="Q6QNY0"/>
<dbReference type="ProteomicsDB" id="67306"/>
<dbReference type="Pumba" id="Q6QNY0"/>
<dbReference type="Antibodypedia" id="59249">
    <property type="antibodies" value="81 antibodies from 15 providers"/>
</dbReference>
<dbReference type="DNASU" id="388552"/>
<dbReference type="Ensembl" id="ENST00000433642.3">
    <property type="protein sequence ID" value="ENSP00000393840.1"/>
    <property type="gene ID" value="ENSG00000189114.8"/>
</dbReference>
<dbReference type="Ensembl" id="ENST00000587722.1">
    <property type="protein sequence ID" value="ENSP00000468281.1"/>
    <property type="gene ID" value="ENSG00000189114.8"/>
</dbReference>
<dbReference type="GeneID" id="388552"/>
<dbReference type="KEGG" id="hsa:388552"/>
<dbReference type="MANE-Select" id="ENST00000433642.3">
    <property type="protein sequence ID" value="ENSP00000393840.1"/>
    <property type="RefSeq nucleotide sequence ID" value="NM_212550.5"/>
    <property type="RefSeq protein sequence ID" value="NP_997715.1"/>
</dbReference>
<dbReference type="UCSC" id="uc002pax.5">
    <property type="organism name" value="human"/>
</dbReference>
<dbReference type="AGR" id="HGNC:20914"/>
<dbReference type="CTD" id="388552"/>
<dbReference type="DisGeNET" id="388552"/>
<dbReference type="GeneCards" id="BLOC1S3"/>
<dbReference type="GeneReviews" id="BLOC1S3"/>
<dbReference type="HGNC" id="HGNC:20914">
    <property type="gene designation" value="BLOC1S3"/>
</dbReference>
<dbReference type="HPA" id="ENSG00000189114">
    <property type="expression patterns" value="Low tissue specificity"/>
</dbReference>
<dbReference type="MalaCards" id="BLOC1S3"/>
<dbReference type="MIM" id="609762">
    <property type="type" value="gene"/>
</dbReference>
<dbReference type="MIM" id="614077">
    <property type="type" value="phenotype"/>
</dbReference>
<dbReference type="neXtProt" id="NX_Q6QNY0"/>
<dbReference type="OpenTargets" id="ENSG00000189114"/>
<dbReference type="Orphanet" id="231531">
    <property type="disease" value="Hermansky-Pudlak syndrome due to BLOC-1 deficiency"/>
</dbReference>
<dbReference type="PharmGKB" id="PA134884924"/>
<dbReference type="VEuPathDB" id="HostDB:ENSG00000189114"/>
<dbReference type="eggNOG" id="ENOG502RZCG">
    <property type="taxonomic scope" value="Eukaryota"/>
</dbReference>
<dbReference type="GeneTree" id="ENSGT00390000008756"/>
<dbReference type="HOGENOM" id="CLU_116012_0_0_1"/>
<dbReference type="InParanoid" id="Q6QNY0"/>
<dbReference type="OMA" id="RDHPDMH"/>
<dbReference type="OrthoDB" id="5984572at2759"/>
<dbReference type="PAN-GO" id="Q6QNY0">
    <property type="GO annotations" value="1 GO annotation based on evolutionary models"/>
</dbReference>
<dbReference type="PhylomeDB" id="Q6QNY0"/>
<dbReference type="TreeFam" id="TF336303"/>
<dbReference type="PathwayCommons" id="Q6QNY0"/>
<dbReference type="Reactome" id="R-HSA-432722">
    <property type="pathway name" value="Golgi Associated Vesicle Biogenesis"/>
</dbReference>
<dbReference type="SignaLink" id="Q6QNY0"/>
<dbReference type="SIGNOR" id="Q6QNY0"/>
<dbReference type="BioGRID-ORCS" id="388552">
    <property type="hits" value="17 hits in 1154 CRISPR screens"/>
</dbReference>
<dbReference type="GenomeRNAi" id="388552"/>
<dbReference type="Pharos" id="Q6QNY0">
    <property type="development level" value="Tbio"/>
</dbReference>
<dbReference type="PRO" id="PR:Q6QNY0"/>
<dbReference type="Proteomes" id="UP000005640">
    <property type="component" value="Chromosome 19"/>
</dbReference>
<dbReference type="RNAct" id="Q6QNY0">
    <property type="molecule type" value="protein"/>
</dbReference>
<dbReference type="Bgee" id="ENSG00000189114">
    <property type="expression patterns" value="Expressed in oocyte and 158 other cell types or tissues"/>
</dbReference>
<dbReference type="ExpressionAtlas" id="Q6QNY0">
    <property type="expression patterns" value="baseline and differential"/>
</dbReference>
<dbReference type="GO" id="GO:1904115">
    <property type="term" value="C:axon cytoplasm"/>
    <property type="evidence" value="ECO:0007669"/>
    <property type="project" value="GOC"/>
</dbReference>
<dbReference type="GO" id="GO:0031083">
    <property type="term" value="C:BLOC-1 complex"/>
    <property type="evidence" value="ECO:0000314"/>
    <property type="project" value="UniProtKB"/>
</dbReference>
<dbReference type="GO" id="GO:0005829">
    <property type="term" value="C:cytosol"/>
    <property type="evidence" value="ECO:0000304"/>
    <property type="project" value="Reactome"/>
</dbReference>
<dbReference type="GO" id="GO:0030133">
    <property type="term" value="C:transport vesicle"/>
    <property type="evidence" value="ECO:0000314"/>
    <property type="project" value="UniProtKB"/>
</dbReference>
<dbReference type="GO" id="GO:0008320">
    <property type="term" value="F:protein transmembrane transporter activity"/>
    <property type="evidence" value="ECO:0007669"/>
    <property type="project" value="Ensembl"/>
</dbReference>
<dbReference type="GO" id="GO:0008089">
    <property type="term" value="P:anterograde axonal transport"/>
    <property type="evidence" value="ECO:0000250"/>
    <property type="project" value="UniProtKB"/>
</dbReference>
<dbReference type="GO" id="GO:0048490">
    <property type="term" value="P:anterograde synaptic vesicle transport"/>
    <property type="evidence" value="ECO:0000250"/>
    <property type="project" value="UniProtKB"/>
</dbReference>
<dbReference type="GO" id="GO:0035646">
    <property type="term" value="P:endosome to melanosome transport"/>
    <property type="evidence" value="ECO:0000314"/>
    <property type="project" value="UniProtKB"/>
</dbReference>
<dbReference type="GO" id="GO:0001654">
    <property type="term" value="P:eye development"/>
    <property type="evidence" value="ECO:0000315"/>
    <property type="project" value="UniProtKB"/>
</dbReference>
<dbReference type="GO" id="GO:0032438">
    <property type="term" value="P:melanosome organization"/>
    <property type="evidence" value="ECO:0000303"/>
    <property type="project" value="UniProtKB"/>
</dbReference>
<dbReference type="GO" id="GO:0032402">
    <property type="term" value="P:melanosome transport"/>
    <property type="evidence" value="ECO:0000314"/>
    <property type="project" value="UniProtKB"/>
</dbReference>
<dbReference type="GO" id="GO:0031175">
    <property type="term" value="P:neuron projection development"/>
    <property type="evidence" value="ECO:0000250"/>
    <property type="project" value="UniProtKB"/>
</dbReference>
<dbReference type="GO" id="GO:0043473">
    <property type="term" value="P:pigmentation"/>
    <property type="evidence" value="ECO:0000315"/>
    <property type="project" value="UniProtKB"/>
</dbReference>
<dbReference type="GO" id="GO:0030168">
    <property type="term" value="P:platelet activation"/>
    <property type="evidence" value="ECO:0000315"/>
    <property type="project" value="UniProtKB"/>
</dbReference>
<dbReference type="GO" id="GO:0060155">
    <property type="term" value="P:platelet dense granule organization"/>
    <property type="evidence" value="ECO:0000303"/>
    <property type="project" value="UniProtKB"/>
</dbReference>
<dbReference type="GO" id="GO:0032816">
    <property type="term" value="P:positive regulation of natural killer cell activation"/>
    <property type="evidence" value="ECO:0007669"/>
    <property type="project" value="Ensembl"/>
</dbReference>
<dbReference type="GO" id="GO:0009410">
    <property type="term" value="P:response to xenobiotic stimulus"/>
    <property type="evidence" value="ECO:0007669"/>
    <property type="project" value="Ensembl"/>
</dbReference>
<dbReference type="GO" id="GO:0033299">
    <property type="term" value="P:secretion of lysosomal enzymes"/>
    <property type="evidence" value="ECO:0007669"/>
    <property type="project" value="Ensembl"/>
</dbReference>
<dbReference type="InterPro" id="IPR017245">
    <property type="entry name" value="BLOC-1_complex_su-3"/>
</dbReference>
<dbReference type="PANTHER" id="PTHR31974">
    <property type="entry name" value="BIOGENESIS OF LYSOSOME-RELATED ORGANELLES COMPLEX 1 SUBUNIT 3"/>
    <property type="match status" value="1"/>
</dbReference>
<dbReference type="PANTHER" id="PTHR31974:SF2">
    <property type="entry name" value="BIOGENESIS OF LYSOSOME-RELATED ORGANELLES COMPLEX 1 SUBUNIT 3"/>
    <property type="match status" value="1"/>
</dbReference>
<dbReference type="Pfam" id="PF15753">
    <property type="entry name" value="BLOC1S3"/>
    <property type="match status" value="1"/>
</dbReference>
<dbReference type="PIRSF" id="PIRSF037630">
    <property type="entry name" value="BLOC-1_complex_subunit_3"/>
    <property type="match status" value="1"/>
</dbReference>
<sequence>MASQGRRRRPLRRPETVVPGEATETDSERSASSSEEEELYLGPSGPTRGRPTGLRVAGEAAETDSEPEPEPEPTAAPRDLPPLVVQRESAEEAWGTEEAPAPAPARSLLQLRLAESQARLDHDVAAAVSGVYRRAGRDVAALASRLAAAQAAGLAAAHSVRLARGDLCALAERLDIVAGCRLLPDIRGVPGTEPEKDPGPRA</sequence>
<comment type="function">
    <text evidence="4 5">Component of the BLOC-1 complex, a complex that is required for normal biogenesis of lysosome-related organelles (LRO), such as platelet dense granules and melanosomes. In concert with the AP-3 complex, the BLOC-1 complex is required to target membrane protein cargos into vesicles assembled at cell bodies for delivery into neurites and nerve terminals. The BLOC-1 complex, in association with SNARE proteins, is also proposed to be involved in neurite extension. Plays a role in intracellular vesicle trafficking.</text>
</comment>
<comment type="subunit">
    <text evidence="1 3 6">Interacts with BLOC1S4, BLOC1S5 and BLOC1S6 (By similarity). Component of the biogenesis of lysosome-related organelles complex 1 (BLOC-1) composed of BLOC1S1, BLOC1S2, BLOC1S3, BLOC1S4, BLOC1S5, BLOC1S6, DTNBP1/BLOC1S7 and SNAPIN/BLOC1S8. Octamer composed of one copy each BLOC1S1, BLOC1S2, BLOC1S3, BLOC1S4, BLOC1S5, BLOC1S6, DTNBP1/BLOC1S7 and SNAPIN/BLOC1S8. The BLOC-1 complex associates with the AP-3 protein complex and membrane protein cargos. Interacts directly with BLOC1S2.</text>
</comment>
<comment type="interaction">
    <interactant intactId="EBI-465930">
        <id>Q6QNY0</id>
    </interactant>
    <interactant intactId="EBI-465872">
        <id>Q6QNY1</id>
        <label>BLOC1S2</label>
    </interactant>
    <organismsDiffer>false</organismsDiffer>
    <experiments>3</experiments>
</comment>
<comment type="subcellular location">
    <subcellularLocation>
        <location evidence="1">Cytoplasm</location>
    </subcellularLocation>
</comment>
<comment type="disease" evidence="4">
    <disease id="DI-00564">
        <name>Hermansky-Pudlak syndrome 8</name>
        <acronym>HPS8</acronym>
        <description>A form of Hermansky-Pudlak syndrome, a genetically heterogeneous autosomal recessive disorder characterized by oculocutaneous albinism, bleeding due to platelet storage pool deficiency, and lysosomal storage defects. This syndrome results from defects of diverse cytoplasmic organelles including melanosomes, platelet dense granules and lysosomes. Ceroid storage in the lungs is associated with pulmonary fibrosis, a common cause of premature death in individuals with HPS.</description>
        <dbReference type="MIM" id="614077"/>
    </disease>
    <text>The disease is caused by variants affecting the gene represented in this entry.</text>
</comment>
<comment type="similarity">
    <text evidence="7">Belongs to the BLOC1S3 family.</text>
</comment>
<keyword id="KW-0015">Albinism</keyword>
<keyword id="KW-0963">Cytoplasm</keyword>
<keyword id="KW-0363">Hermansky-Pudlak syndrome</keyword>
<keyword id="KW-0597">Phosphoprotein</keyword>
<keyword id="KW-1267">Proteomics identification</keyword>
<keyword id="KW-1185">Reference proteome</keyword>
<reference key="1">
    <citation type="journal article" date="2004" name="J. Biol. Chem.">
        <title>Identification of snapin and three novel proteins (BLOS1, BLOS2, and BLOS3/reduced pigmentation) as subunits of biogenesis of lysosome-related organelles complex-1 (BLOC-1).</title>
        <authorList>
            <person name="Starcevic M."/>
            <person name="Dell'Angelica E.C."/>
        </authorList>
    </citation>
    <scope>NUCLEOTIDE SEQUENCE [MRNA]</scope>
    <scope>IDENTIFICATION IN THE BLOC-1 COMPLEX</scope>
    <scope>INTERACTION WITH BLOC1S2</scope>
    <source>
        <tissue>Brain</tissue>
    </source>
</reference>
<reference key="2">
    <citation type="journal article" date="2004" name="Nat. Genet.">
        <title>Complete sequencing and characterization of 21,243 full-length human cDNAs.</title>
        <authorList>
            <person name="Ota T."/>
            <person name="Suzuki Y."/>
            <person name="Nishikawa T."/>
            <person name="Otsuki T."/>
            <person name="Sugiyama T."/>
            <person name="Irie R."/>
            <person name="Wakamatsu A."/>
            <person name="Hayashi K."/>
            <person name="Sato H."/>
            <person name="Nagai K."/>
            <person name="Kimura K."/>
            <person name="Makita H."/>
            <person name="Sekine M."/>
            <person name="Obayashi M."/>
            <person name="Nishi T."/>
            <person name="Shibahara T."/>
            <person name="Tanaka T."/>
            <person name="Ishii S."/>
            <person name="Yamamoto J."/>
            <person name="Saito K."/>
            <person name="Kawai Y."/>
            <person name="Isono Y."/>
            <person name="Nakamura Y."/>
            <person name="Nagahari K."/>
            <person name="Murakami K."/>
            <person name="Yasuda T."/>
            <person name="Iwayanagi T."/>
            <person name="Wagatsuma M."/>
            <person name="Shiratori A."/>
            <person name="Sudo H."/>
            <person name="Hosoiri T."/>
            <person name="Kaku Y."/>
            <person name="Kodaira H."/>
            <person name="Kondo H."/>
            <person name="Sugawara M."/>
            <person name="Takahashi M."/>
            <person name="Kanda K."/>
            <person name="Yokoi T."/>
            <person name="Furuya T."/>
            <person name="Kikkawa E."/>
            <person name="Omura Y."/>
            <person name="Abe K."/>
            <person name="Kamihara K."/>
            <person name="Katsuta N."/>
            <person name="Sato K."/>
            <person name="Tanikawa M."/>
            <person name="Yamazaki M."/>
            <person name="Ninomiya K."/>
            <person name="Ishibashi T."/>
            <person name="Yamashita H."/>
            <person name="Murakawa K."/>
            <person name="Fujimori K."/>
            <person name="Tanai H."/>
            <person name="Kimata M."/>
            <person name="Watanabe M."/>
            <person name="Hiraoka S."/>
            <person name="Chiba Y."/>
            <person name="Ishida S."/>
            <person name="Ono Y."/>
            <person name="Takiguchi S."/>
            <person name="Watanabe S."/>
            <person name="Yosida M."/>
            <person name="Hotuta T."/>
            <person name="Kusano J."/>
            <person name="Kanehori K."/>
            <person name="Takahashi-Fujii A."/>
            <person name="Hara H."/>
            <person name="Tanase T.-O."/>
            <person name="Nomura Y."/>
            <person name="Togiya S."/>
            <person name="Komai F."/>
            <person name="Hara R."/>
            <person name="Takeuchi K."/>
            <person name="Arita M."/>
            <person name="Imose N."/>
            <person name="Musashino K."/>
            <person name="Yuuki H."/>
            <person name="Oshima A."/>
            <person name="Sasaki N."/>
            <person name="Aotsuka S."/>
            <person name="Yoshikawa Y."/>
            <person name="Matsunawa H."/>
            <person name="Ichihara T."/>
            <person name="Shiohata N."/>
            <person name="Sano S."/>
            <person name="Moriya S."/>
            <person name="Momiyama H."/>
            <person name="Satoh N."/>
            <person name="Takami S."/>
            <person name="Terashima Y."/>
            <person name="Suzuki O."/>
            <person name="Nakagawa S."/>
            <person name="Senoh A."/>
            <person name="Mizoguchi H."/>
            <person name="Goto Y."/>
            <person name="Shimizu F."/>
            <person name="Wakebe H."/>
            <person name="Hishigaki H."/>
            <person name="Watanabe T."/>
            <person name="Sugiyama A."/>
            <person name="Takemoto M."/>
            <person name="Kawakami B."/>
            <person name="Yamazaki M."/>
            <person name="Watanabe K."/>
            <person name="Kumagai A."/>
            <person name="Itakura S."/>
            <person name="Fukuzumi Y."/>
            <person name="Fujimori Y."/>
            <person name="Komiyama M."/>
            <person name="Tashiro H."/>
            <person name="Tanigami A."/>
            <person name="Fujiwara T."/>
            <person name="Ono T."/>
            <person name="Yamada K."/>
            <person name="Fujii Y."/>
            <person name="Ozaki K."/>
            <person name="Hirao M."/>
            <person name="Ohmori Y."/>
            <person name="Kawabata A."/>
            <person name="Hikiji T."/>
            <person name="Kobatake N."/>
            <person name="Inagaki H."/>
            <person name="Ikema Y."/>
            <person name="Okamoto S."/>
            <person name="Okitani R."/>
            <person name="Kawakami T."/>
            <person name="Noguchi S."/>
            <person name="Itoh T."/>
            <person name="Shigeta K."/>
            <person name="Senba T."/>
            <person name="Matsumura K."/>
            <person name="Nakajima Y."/>
            <person name="Mizuno T."/>
            <person name="Morinaga M."/>
            <person name="Sasaki M."/>
            <person name="Togashi T."/>
            <person name="Oyama M."/>
            <person name="Hata H."/>
            <person name="Watanabe M."/>
            <person name="Komatsu T."/>
            <person name="Mizushima-Sugano J."/>
            <person name="Satoh T."/>
            <person name="Shirai Y."/>
            <person name="Takahashi Y."/>
            <person name="Nakagawa K."/>
            <person name="Okumura K."/>
            <person name="Nagase T."/>
            <person name="Nomura N."/>
            <person name="Kikuchi H."/>
            <person name="Masuho Y."/>
            <person name="Yamashita R."/>
            <person name="Nakai K."/>
            <person name="Yada T."/>
            <person name="Nakamura Y."/>
            <person name="Ohara O."/>
            <person name="Isogai T."/>
            <person name="Sugano S."/>
        </authorList>
    </citation>
    <scope>NUCLEOTIDE SEQUENCE [LARGE SCALE MRNA]</scope>
    <source>
        <tissue>Tongue</tissue>
    </source>
</reference>
<reference key="3">
    <citation type="journal article" date="2004" name="Genome Res.">
        <title>The status, quality, and expansion of the NIH full-length cDNA project: the Mammalian Gene Collection (MGC).</title>
        <authorList>
            <consortium name="The MGC Project Team"/>
        </authorList>
    </citation>
    <scope>NUCLEOTIDE SEQUENCE [LARGE SCALE MRNA]</scope>
    <source>
        <tissue>Brain</tissue>
        <tissue>Testis</tissue>
    </source>
</reference>
<reference key="4">
    <citation type="journal article" date="2006" name="Am. J. Hum. Genet.">
        <title>A germline mutation in BLOC1S3/reduced pigmentation causes a novel variant of Hermansky-Pudlak syndrome (HPS8).</title>
        <authorList>
            <person name="Morgan N.V."/>
            <person name="Pasha S."/>
            <person name="Johnson C.A."/>
            <person name="Ainsworth J.R."/>
            <person name="Eady R.A.J."/>
            <person name="Dawood B."/>
            <person name="McKeown C."/>
            <person name="Trembath R.C."/>
            <person name="Wilde J."/>
            <person name="Watson S.P."/>
            <person name="Maher E.R."/>
        </authorList>
    </citation>
    <scope>FUNCTION</scope>
    <scope>INVOLVEMENT IN HPS8</scope>
</reference>
<reference key="5">
    <citation type="journal article" date="2007" name="Mol. Biol. Cell">
        <title>BLOC-1 is required for cargo-specific sorting from vacuolar early endosomes toward lysosome-related organelles.</title>
        <authorList>
            <person name="Setty S.R."/>
            <person name="Tenza D."/>
            <person name="Truschel S.T."/>
            <person name="Chou E."/>
            <person name="Sviderskaya E.V."/>
            <person name="Theos A.C."/>
            <person name="Lamoreux M.L."/>
            <person name="Di Pietro S.M."/>
            <person name="Starcevic M."/>
            <person name="Bennett D.C."/>
            <person name="Dell'Angelica E.C."/>
            <person name="Raposo G."/>
            <person name="Marks M.S."/>
        </authorList>
    </citation>
    <scope>FUNCTION</scope>
</reference>
<reference key="6">
    <citation type="journal article" date="2008" name="Proc. Natl. Acad. Sci. U.S.A.">
        <title>A quantitative atlas of mitotic phosphorylation.</title>
        <authorList>
            <person name="Dephoure N."/>
            <person name="Zhou C."/>
            <person name="Villen J."/>
            <person name="Beausoleil S.A."/>
            <person name="Bakalarski C.E."/>
            <person name="Elledge S.J."/>
            <person name="Gygi S.P."/>
        </authorList>
    </citation>
    <scope>PHOSPHORYLATION [LARGE SCALE ANALYSIS] AT THR-63 AND SER-65</scope>
    <scope>IDENTIFICATION BY MASS SPECTROMETRY [LARGE SCALE ANALYSIS]</scope>
    <source>
        <tissue>Cervix carcinoma</tissue>
    </source>
</reference>
<reference key="7">
    <citation type="journal article" date="2009" name="Anal. Chem.">
        <title>Lys-N and trypsin cover complementary parts of the phosphoproteome in a refined SCX-based approach.</title>
        <authorList>
            <person name="Gauci S."/>
            <person name="Helbig A.O."/>
            <person name="Slijper M."/>
            <person name="Krijgsveld J."/>
            <person name="Heck A.J."/>
            <person name="Mohammed S."/>
        </authorList>
    </citation>
    <scope>IDENTIFICATION BY MASS SPECTROMETRY [LARGE SCALE ANALYSIS]</scope>
</reference>
<reference key="8">
    <citation type="journal article" date="2009" name="Sci. Signal.">
        <title>Quantitative phosphoproteomic analysis of T cell receptor signaling reveals system-wide modulation of protein-protein interactions.</title>
        <authorList>
            <person name="Mayya V."/>
            <person name="Lundgren D.H."/>
            <person name="Hwang S.-I."/>
            <person name="Rezaul K."/>
            <person name="Wu L."/>
            <person name="Eng J.K."/>
            <person name="Rodionov V."/>
            <person name="Han D.K."/>
        </authorList>
    </citation>
    <scope>PHOSPHORYLATION [LARGE SCALE ANALYSIS] AT THR-63 AND SER-65</scope>
    <scope>IDENTIFICATION BY MASS SPECTROMETRY [LARGE SCALE ANALYSIS]</scope>
    <source>
        <tissue>Leukemic T-cell</tissue>
    </source>
</reference>
<reference key="9">
    <citation type="journal article" date="2010" name="Sci. Signal.">
        <title>Quantitative phosphoproteomics reveals widespread full phosphorylation site occupancy during mitosis.</title>
        <authorList>
            <person name="Olsen J.V."/>
            <person name="Vermeulen M."/>
            <person name="Santamaria A."/>
            <person name="Kumar C."/>
            <person name="Miller M.L."/>
            <person name="Jensen L.J."/>
            <person name="Gnad F."/>
            <person name="Cox J."/>
            <person name="Jensen T.S."/>
            <person name="Nigg E.A."/>
            <person name="Brunak S."/>
            <person name="Mann M."/>
        </authorList>
    </citation>
    <scope>PHOSPHORYLATION [LARGE SCALE ANALYSIS] AT THR-63 AND SER-65</scope>
    <scope>IDENTIFICATION BY MASS SPECTROMETRY [LARGE SCALE ANALYSIS]</scope>
    <source>
        <tissue>Cervix carcinoma</tissue>
    </source>
</reference>
<reference key="10">
    <citation type="journal article" date="2012" name="J. Biol. Chem.">
        <title>Assembly and architecture of biogenesis of lysosome-related organelles complex-1 (BLOC-1).</title>
        <authorList>
            <person name="Lee H.H."/>
            <person name="Nemecek D."/>
            <person name="Schindler C."/>
            <person name="Smith W.J."/>
            <person name="Ghirlando R."/>
            <person name="Steven A.C."/>
            <person name="Bonifacino J.S."/>
            <person name="Hurley J.H."/>
        </authorList>
    </citation>
    <scope>IDENTIFICATION IN THE BLOC-1 COMPLEX</scope>
    <scope>COMPOSITION OF THE BLOC-1 COMPLEX</scope>
</reference>
<reference key="11">
    <citation type="journal article" date="2013" name="J. Proteome Res.">
        <title>Toward a comprehensive characterization of a human cancer cell phosphoproteome.</title>
        <authorList>
            <person name="Zhou H."/>
            <person name="Di Palma S."/>
            <person name="Preisinger C."/>
            <person name="Peng M."/>
            <person name="Polat A.N."/>
            <person name="Heck A.J."/>
            <person name="Mohammed S."/>
        </authorList>
    </citation>
    <scope>PHOSPHORYLATION [LARGE SCALE ANALYSIS] AT THR-63 AND SER-65</scope>
    <scope>IDENTIFICATION BY MASS SPECTROMETRY [LARGE SCALE ANALYSIS]</scope>
    <source>
        <tissue>Cervix carcinoma</tissue>
        <tissue>Erythroleukemia</tissue>
    </source>
</reference>
<reference key="12">
    <citation type="journal article" date="2014" name="J. Proteomics">
        <title>An enzyme assisted RP-RPLC approach for in-depth analysis of human liver phosphoproteome.</title>
        <authorList>
            <person name="Bian Y."/>
            <person name="Song C."/>
            <person name="Cheng K."/>
            <person name="Dong M."/>
            <person name="Wang F."/>
            <person name="Huang J."/>
            <person name="Sun D."/>
            <person name="Wang L."/>
            <person name="Ye M."/>
            <person name="Zou H."/>
        </authorList>
    </citation>
    <scope>PHOSPHORYLATION [LARGE SCALE ANALYSIS] AT THR-63 AND SER-65</scope>
    <scope>IDENTIFICATION BY MASS SPECTROMETRY [LARGE SCALE ANALYSIS]</scope>
    <source>
        <tissue>Liver</tissue>
    </source>
</reference>
<accession>Q6QNY0</accession>
<accession>B2RXB8</accession>
<proteinExistence type="evidence at protein level"/>
<organism>
    <name type="scientific">Homo sapiens</name>
    <name type="common">Human</name>
    <dbReference type="NCBI Taxonomy" id="9606"/>
    <lineage>
        <taxon>Eukaryota</taxon>
        <taxon>Metazoa</taxon>
        <taxon>Chordata</taxon>
        <taxon>Craniata</taxon>
        <taxon>Vertebrata</taxon>
        <taxon>Euteleostomi</taxon>
        <taxon>Mammalia</taxon>
        <taxon>Eutheria</taxon>
        <taxon>Euarchontoglires</taxon>
        <taxon>Primates</taxon>
        <taxon>Haplorrhini</taxon>
        <taxon>Catarrhini</taxon>
        <taxon>Hominidae</taxon>
        <taxon>Homo</taxon>
    </lineage>
</organism>
<evidence type="ECO:0000250" key="1"/>
<evidence type="ECO:0000256" key="2">
    <source>
        <dbReference type="SAM" id="MobiDB-lite"/>
    </source>
</evidence>
<evidence type="ECO:0000269" key="3">
    <source>
    </source>
</evidence>
<evidence type="ECO:0000269" key="4">
    <source>
    </source>
</evidence>
<evidence type="ECO:0000269" key="5">
    <source>
    </source>
</evidence>
<evidence type="ECO:0000269" key="6">
    <source>
    </source>
</evidence>
<evidence type="ECO:0000305" key="7"/>
<evidence type="ECO:0007744" key="8">
    <source>
    </source>
</evidence>
<evidence type="ECO:0007744" key="9">
    <source>
    </source>
</evidence>
<evidence type="ECO:0007744" key="10">
    <source>
    </source>
</evidence>
<evidence type="ECO:0007744" key="11">
    <source>
    </source>
</evidence>
<evidence type="ECO:0007744" key="12">
    <source>
    </source>
</evidence>
<gene>
    <name type="primary">BLOC1S3</name>
    <name type="synonym">BLOS3</name>
</gene>
<feature type="chain" id="PRO_0000234548" description="Biogenesis of lysosome-related organelles complex 1 subunit 3">
    <location>
        <begin position="1"/>
        <end position="202"/>
    </location>
</feature>
<feature type="region of interest" description="Disordered" evidence="2">
    <location>
        <begin position="1"/>
        <end position="82"/>
    </location>
</feature>
<feature type="compositionally biased region" description="Basic residues" evidence="2">
    <location>
        <begin position="1"/>
        <end position="11"/>
    </location>
</feature>
<feature type="compositionally biased region" description="Low complexity" evidence="2">
    <location>
        <begin position="41"/>
        <end position="55"/>
    </location>
</feature>
<feature type="compositionally biased region" description="Acidic residues" evidence="2">
    <location>
        <begin position="61"/>
        <end position="71"/>
    </location>
</feature>
<feature type="modified residue" description="Phosphothreonine" evidence="8 9 10 11 12">
    <location>
        <position position="63"/>
    </location>
</feature>
<feature type="modified residue" description="Phosphoserine" evidence="8 9 10 11 12">
    <location>
        <position position="65"/>
    </location>
</feature>
<protein>
    <recommendedName>
        <fullName>Biogenesis of lysosome-related organelles complex 1 subunit 3</fullName>
        <shortName>BLOC-1 subunit 3</shortName>
    </recommendedName>
</protein>